<protein>
    <recommendedName>
        <fullName evidence="1">Glycerol-3-phosphate dehydrogenase [NAD(P)+]</fullName>
        <ecNumber evidence="1">1.1.1.94</ecNumber>
    </recommendedName>
    <alternativeName>
        <fullName evidence="1">NAD(P)(+)-dependent glycerol-3-phosphate dehydrogenase</fullName>
    </alternativeName>
    <alternativeName>
        <fullName evidence="1">NAD(P)H-dependent dihydroxyacetone-phosphate reductase</fullName>
    </alternativeName>
</protein>
<keyword id="KW-0963">Cytoplasm</keyword>
<keyword id="KW-0444">Lipid biosynthesis</keyword>
<keyword id="KW-0443">Lipid metabolism</keyword>
<keyword id="KW-0520">NAD</keyword>
<keyword id="KW-0521">NADP</keyword>
<keyword id="KW-0547">Nucleotide-binding</keyword>
<keyword id="KW-0560">Oxidoreductase</keyword>
<keyword id="KW-0594">Phospholipid biosynthesis</keyword>
<keyword id="KW-1208">Phospholipid metabolism</keyword>
<reference key="1">
    <citation type="journal article" date="2005" name="J. Bacteriol.">
        <title>Completion of the genome sequence of Brucella abortus and comparison to the highly similar genomes of Brucella melitensis and Brucella suis.</title>
        <authorList>
            <person name="Halling S.M."/>
            <person name="Peterson-Burch B.D."/>
            <person name="Bricker B.J."/>
            <person name="Zuerner R.L."/>
            <person name="Qing Z."/>
            <person name="Li L.-L."/>
            <person name="Kapur V."/>
            <person name="Alt D.P."/>
            <person name="Olsen S.C."/>
        </authorList>
    </citation>
    <scope>NUCLEOTIDE SEQUENCE [LARGE SCALE GENOMIC DNA]</scope>
    <source>
        <strain>9-941</strain>
    </source>
</reference>
<comment type="function">
    <text evidence="1">Catalyzes the reduction of the glycolytic intermediate dihydroxyacetone phosphate (DHAP) to sn-glycerol 3-phosphate (G3P), the key precursor for phospholipid synthesis.</text>
</comment>
<comment type="catalytic activity">
    <reaction evidence="1">
        <text>sn-glycerol 3-phosphate + NAD(+) = dihydroxyacetone phosphate + NADH + H(+)</text>
        <dbReference type="Rhea" id="RHEA:11092"/>
        <dbReference type="ChEBI" id="CHEBI:15378"/>
        <dbReference type="ChEBI" id="CHEBI:57540"/>
        <dbReference type="ChEBI" id="CHEBI:57597"/>
        <dbReference type="ChEBI" id="CHEBI:57642"/>
        <dbReference type="ChEBI" id="CHEBI:57945"/>
        <dbReference type="EC" id="1.1.1.94"/>
    </reaction>
    <physiologicalReaction direction="right-to-left" evidence="1">
        <dbReference type="Rhea" id="RHEA:11094"/>
    </physiologicalReaction>
</comment>
<comment type="catalytic activity">
    <reaction evidence="1">
        <text>sn-glycerol 3-phosphate + NADP(+) = dihydroxyacetone phosphate + NADPH + H(+)</text>
        <dbReference type="Rhea" id="RHEA:11096"/>
        <dbReference type="ChEBI" id="CHEBI:15378"/>
        <dbReference type="ChEBI" id="CHEBI:57597"/>
        <dbReference type="ChEBI" id="CHEBI:57642"/>
        <dbReference type="ChEBI" id="CHEBI:57783"/>
        <dbReference type="ChEBI" id="CHEBI:58349"/>
        <dbReference type="EC" id="1.1.1.94"/>
    </reaction>
    <physiologicalReaction direction="right-to-left" evidence="1">
        <dbReference type="Rhea" id="RHEA:11098"/>
    </physiologicalReaction>
</comment>
<comment type="pathway">
    <text evidence="1">Membrane lipid metabolism; glycerophospholipid metabolism.</text>
</comment>
<comment type="subcellular location">
    <subcellularLocation>
        <location evidence="1">Cytoplasm</location>
    </subcellularLocation>
</comment>
<comment type="similarity">
    <text evidence="1">Belongs to the NAD-dependent glycerol-3-phosphate dehydrogenase family.</text>
</comment>
<proteinExistence type="inferred from homology"/>
<evidence type="ECO:0000255" key="1">
    <source>
        <dbReference type="HAMAP-Rule" id="MF_00394"/>
    </source>
</evidence>
<name>GPDA_BRUAB</name>
<sequence>MSTKIAVLGGGAWGTALAAMAAKGGHESWLYARDAETVVAINKDRRNPRYLGDITLADGIRASTDAAAVVTGADAVLAVIPAQAMRNGLSELGTLIPQASPIVLCAKGIEQNTGRLMSEVVAEILPDHRIAALSGPSFASDVARGLPTAVTVACEDANTADRLAALLSGPAFRCYSTTDLKGVETGGALKNVLAIAAGAAIGRGYGASAQAALVTRGFAELRRIGQAMSARPETIMGLSGLGDLMLTCSSSQSRNYSYGLALGRGEDLTSRPLAEGVATAPIAAELCRKHNISAPIIDAVGALLDGKITIDEAVTALLNRPLKTED</sequence>
<accession>Q57B06</accession>
<dbReference type="EC" id="1.1.1.94" evidence="1"/>
<dbReference type="EMBL" id="AE017223">
    <property type="protein sequence ID" value="AAX75178.1"/>
    <property type="molecule type" value="Genomic_DNA"/>
</dbReference>
<dbReference type="RefSeq" id="WP_002964959.1">
    <property type="nucleotide sequence ID" value="NC_006932.1"/>
</dbReference>
<dbReference type="SMR" id="Q57B06"/>
<dbReference type="EnsemblBacteria" id="AAX75178">
    <property type="protein sequence ID" value="AAX75178"/>
    <property type="gene ID" value="BruAb1_1866"/>
</dbReference>
<dbReference type="KEGG" id="bmb:BruAb1_1866"/>
<dbReference type="HOGENOM" id="CLU_033449_0_2_5"/>
<dbReference type="UniPathway" id="UPA00940"/>
<dbReference type="Proteomes" id="UP000000540">
    <property type="component" value="Chromosome I"/>
</dbReference>
<dbReference type="GO" id="GO:0005829">
    <property type="term" value="C:cytosol"/>
    <property type="evidence" value="ECO:0007669"/>
    <property type="project" value="TreeGrafter"/>
</dbReference>
<dbReference type="GO" id="GO:0047952">
    <property type="term" value="F:glycerol-3-phosphate dehydrogenase [NAD(P)+] activity"/>
    <property type="evidence" value="ECO:0007669"/>
    <property type="project" value="UniProtKB-UniRule"/>
</dbReference>
<dbReference type="GO" id="GO:0051287">
    <property type="term" value="F:NAD binding"/>
    <property type="evidence" value="ECO:0007669"/>
    <property type="project" value="InterPro"/>
</dbReference>
<dbReference type="GO" id="GO:0005975">
    <property type="term" value="P:carbohydrate metabolic process"/>
    <property type="evidence" value="ECO:0007669"/>
    <property type="project" value="InterPro"/>
</dbReference>
<dbReference type="GO" id="GO:0046167">
    <property type="term" value="P:glycerol-3-phosphate biosynthetic process"/>
    <property type="evidence" value="ECO:0007669"/>
    <property type="project" value="UniProtKB-UniRule"/>
</dbReference>
<dbReference type="GO" id="GO:0046168">
    <property type="term" value="P:glycerol-3-phosphate catabolic process"/>
    <property type="evidence" value="ECO:0007669"/>
    <property type="project" value="InterPro"/>
</dbReference>
<dbReference type="GO" id="GO:0006650">
    <property type="term" value="P:glycerophospholipid metabolic process"/>
    <property type="evidence" value="ECO:0007669"/>
    <property type="project" value="UniProtKB-UniRule"/>
</dbReference>
<dbReference type="GO" id="GO:0008654">
    <property type="term" value="P:phospholipid biosynthetic process"/>
    <property type="evidence" value="ECO:0007669"/>
    <property type="project" value="UniProtKB-KW"/>
</dbReference>
<dbReference type="FunFam" id="3.40.50.720:FF:000019">
    <property type="entry name" value="Glycerol-3-phosphate dehydrogenase [NAD(P)+]"/>
    <property type="match status" value="1"/>
</dbReference>
<dbReference type="Gene3D" id="1.10.1040.10">
    <property type="entry name" value="N-(1-d-carboxylethyl)-l-norvaline Dehydrogenase, domain 2"/>
    <property type="match status" value="1"/>
</dbReference>
<dbReference type="Gene3D" id="3.40.50.720">
    <property type="entry name" value="NAD(P)-binding Rossmann-like Domain"/>
    <property type="match status" value="1"/>
</dbReference>
<dbReference type="HAMAP" id="MF_00394">
    <property type="entry name" value="NAD_Glyc3P_dehydrog"/>
    <property type="match status" value="1"/>
</dbReference>
<dbReference type="InterPro" id="IPR008927">
    <property type="entry name" value="6-PGluconate_DH-like_C_sf"/>
</dbReference>
<dbReference type="InterPro" id="IPR013328">
    <property type="entry name" value="6PGD_dom2"/>
</dbReference>
<dbReference type="InterPro" id="IPR006168">
    <property type="entry name" value="G3P_DH_NAD-dep"/>
</dbReference>
<dbReference type="InterPro" id="IPR006109">
    <property type="entry name" value="G3P_DH_NAD-dep_C"/>
</dbReference>
<dbReference type="InterPro" id="IPR011128">
    <property type="entry name" value="G3P_DH_NAD-dep_N"/>
</dbReference>
<dbReference type="InterPro" id="IPR036291">
    <property type="entry name" value="NAD(P)-bd_dom_sf"/>
</dbReference>
<dbReference type="NCBIfam" id="NF000940">
    <property type="entry name" value="PRK00094.1-2"/>
    <property type="match status" value="1"/>
</dbReference>
<dbReference type="NCBIfam" id="NF000942">
    <property type="entry name" value="PRK00094.1-4"/>
    <property type="match status" value="1"/>
</dbReference>
<dbReference type="PANTHER" id="PTHR11728">
    <property type="entry name" value="GLYCEROL-3-PHOSPHATE DEHYDROGENASE"/>
    <property type="match status" value="1"/>
</dbReference>
<dbReference type="PANTHER" id="PTHR11728:SF1">
    <property type="entry name" value="GLYCEROL-3-PHOSPHATE DEHYDROGENASE [NAD(+)] 2, CHLOROPLASTIC"/>
    <property type="match status" value="1"/>
</dbReference>
<dbReference type="Pfam" id="PF07479">
    <property type="entry name" value="NAD_Gly3P_dh_C"/>
    <property type="match status" value="1"/>
</dbReference>
<dbReference type="Pfam" id="PF01210">
    <property type="entry name" value="NAD_Gly3P_dh_N"/>
    <property type="match status" value="1"/>
</dbReference>
<dbReference type="PIRSF" id="PIRSF000114">
    <property type="entry name" value="Glycerol-3-P_dh"/>
    <property type="match status" value="1"/>
</dbReference>
<dbReference type="PRINTS" id="PR00077">
    <property type="entry name" value="GPDHDRGNASE"/>
</dbReference>
<dbReference type="SUPFAM" id="SSF48179">
    <property type="entry name" value="6-phosphogluconate dehydrogenase C-terminal domain-like"/>
    <property type="match status" value="1"/>
</dbReference>
<dbReference type="SUPFAM" id="SSF51735">
    <property type="entry name" value="NAD(P)-binding Rossmann-fold domains"/>
    <property type="match status" value="1"/>
</dbReference>
<dbReference type="PROSITE" id="PS00957">
    <property type="entry name" value="NAD_G3PDH"/>
    <property type="match status" value="1"/>
</dbReference>
<organism>
    <name type="scientific">Brucella abortus biovar 1 (strain 9-941)</name>
    <dbReference type="NCBI Taxonomy" id="262698"/>
    <lineage>
        <taxon>Bacteria</taxon>
        <taxon>Pseudomonadati</taxon>
        <taxon>Pseudomonadota</taxon>
        <taxon>Alphaproteobacteria</taxon>
        <taxon>Hyphomicrobiales</taxon>
        <taxon>Brucellaceae</taxon>
        <taxon>Brucella/Ochrobactrum group</taxon>
        <taxon>Brucella</taxon>
    </lineage>
</organism>
<feature type="chain" id="PRO_0000255286" description="Glycerol-3-phosphate dehydrogenase [NAD(P)+]">
    <location>
        <begin position="1"/>
        <end position="326"/>
    </location>
</feature>
<feature type="active site" description="Proton acceptor" evidence="1">
    <location>
        <position position="190"/>
    </location>
</feature>
<feature type="binding site" evidence="1">
    <location>
        <position position="13"/>
    </location>
    <ligand>
        <name>NADPH</name>
        <dbReference type="ChEBI" id="CHEBI:57783"/>
    </ligand>
</feature>
<feature type="binding site" evidence="1">
    <location>
        <position position="33"/>
    </location>
    <ligand>
        <name>NADPH</name>
        <dbReference type="ChEBI" id="CHEBI:57783"/>
    </ligand>
</feature>
<feature type="binding site" evidence="1">
    <location>
        <position position="107"/>
    </location>
    <ligand>
        <name>NADPH</name>
        <dbReference type="ChEBI" id="CHEBI:57783"/>
    </ligand>
</feature>
<feature type="binding site" evidence="1">
    <location>
        <position position="107"/>
    </location>
    <ligand>
        <name>sn-glycerol 3-phosphate</name>
        <dbReference type="ChEBI" id="CHEBI:57597"/>
    </ligand>
</feature>
<feature type="binding site" evidence="1">
    <location>
        <position position="135"/>
    </location>
    <ligand>
        <name>sn-glycerol 3-phosphate</name>
        <dbReference type="ChEBI" id="CHEBI:57597"/>
    </ligand>
</feature>
<feature type="binding site" evidence="1">
    <location>
        <position position="137"/>
    </location>
    <ligand>
        <name>sn-glycerol 3-phosphate</name>
        <dbReference type="ChEBI" id="CHEBI:57597"/>
    </ligand>
</feature>
<feature type="binding site" evidence="1">
    <location>
        <position position="139"/>
    </location>
    <ligand>
        <name>NADPH</name>
        <dbReference type="ChEBI" id="CHEBI:57783"/>
    </ligand>
</feature>
<feature type="binding site" evidence="1">
    <location>
        <position position="190"/>
    </location>
    <ligand>
        <name>sn-glycerol 3-phosphate</name>
        <dbReference type="ChEBI" id="CHEBI:57597"/>
    </ligand>
</feature>
<feature type="binding site" evidence="1">
    <location>
        <position position="243"/>
    </location>
    <ligand>
        <name>sn-glycerol 3-phosphate</name>
        <dbReference type="ChEBI" id="CHEBI:57597"/>
    </ligand>
</feature>
<feature type="binding site" evidence="1">
    <location>
        <position position="253"/>
    </location>
    <ligand>
        <name>sn-glycerol 3-phosphate</name>
        <dbReference type="ChEBI" id="CHEBI:57597"/>
    </ligand>
</feature>
<feature type="binding site" evidence="1">
    <location>
        <position position="254"/>
    </location>
    <ligand>
        <name>NADPH</name>
        <dbReference type="ChEBI" id="CHEBI:57783"/>
    </ligand>
</feature>
<feature type="binding site" evidence="1">
    <location>
        <position position="254"/>
    </location>
    <ligand>
        <name>sn-glycerol 3-phosphate</name>
        <dbReference type="ChEBI" id="CHEBI:57597"/>
    </ligand>
</feature>
<feature type="binding site" evidence="1">
    <location>
        <position position="255"/>
    </location>
    <ligand>
        <name>sn-glycerol 3-phosphate</name>
        <dbReference type="ChEBI" id="CHEBI:57597"/>
    </ligand>
</feature>
<feature type="binding site" evidence="1">
    <location>
        <position position="273"/>
    </location>
    <ligand>
        <name>NADPH</name>
        <dbReference type="ChEBI" id="CHEBI:57783"/>
    </ligand>
</feature>
<feature type="binding site" evidence="1">
    <location>
        <position position="275"/>
    </location>
    <ligand>
        <name>NADPH</name>
        <dbReference type="ChEBI" id="CHEBI:57783"/>
    </ligand>
</feature>
<gene>
    <name evidence="1" type="primary">gpsA</name>
    <name type="ordered locus">BruAb1_1866</name>
</gene>